<organism>
    <name type="scientific">Shigella boydii serotype 18 (strain CDC 3083-94 / BS512)</name>
    <dbReference type="NCBI Taxonomy" id="344609"/>
    <lineage>
        <taxon>Bacteria</taxon>
        <taxon>Pseudomonadati</taxon>
        <taxon>Pseudomonadota</taxon>
        <taxon>Gammaproteobacteria</taxon>
        <taxon>Enterobacterales</taxon>
        <taxon>Enterobacteriaceae</taxon>
        <taxon>Shigella</taxon>
    </lineage>
</organism>
<feature type="chain" id="PRO_1000186540" description="Chorismate pyruvate-lyase">
    <location>
        <begin position="1"/>
        <end position="165"/>
    </location>
</feature>
<feature type="binding site" evidence="1">
    <location>
        <position position="35"/>
    </location>
    <ligand>
        <name>substrate</name>
    </ligand>
</feature>
<feature type="binding site" evidence="1">
    <location>
        <position position="77"/>
    </location>
    <ligand>
        <name>substrate</name>
    </ligand>
</feature>
<feature type="binding site" evidence="1">
    <location>
        <position position="115"/>
    </location>
    <ligand>
        <name>substrate</name>
    </ligand>
</feature>
<feature type="binding site" evidence="1">
    <location>
        <position position="156"/>
    </location>
    <ligand>
        <name>substrate</name>
    </ligand>
</feature>
<name>UBIC_SHIB3</name>
<dbReference type="EC" id="4.1.3.40" evidence="1"/>
<dbReference type="EMBL" id="CP001063">
    <property type="protein sequence ID" value="ACD07134.1"/>
    <property type="molecule type" value="Genomic_DNA"/>
</dbReference>
<dbReference type="RefSeq" id="WP_001295693.1">
    <property type="nucleotide sequence ID" value="NC_010658.1"/>
</dbReference>
<dbReference type="SMR" id="B2TX77"/>
<dbReference type="STRING" id="344609.SbBS512_E4558"/>
<dbReference type="KEGG" id="sbc:SbBS512_E4558"/>
<dbReference type="HOGENOM" id="CLU_096824_1_0_6"/>
<dbReference type="UniPathway" id="UPA00232"/>
<dbReference type="Proteomes" id="UP000001030">
    <property type="component" value="Chromosome"/>
</dbReference>
<dbReference type="GO" id="GO:0005829">
    <property type="term" value="C:cytosol"/>
    <property type="evidence" value="ECO:0007669"/>
    <property type="project" value="TreeGrafter"/>
</dbReference>
<dbReference type="GO" id="GO:0008813">
    <property type="term" value="F:chorismate lyase activity"/>
    <property type="evidence" value="ECO:0007669"/>
    <property type="project" value="UniProtKB-UniRule"/>
</dbReference>
<dbReference type="GO" id="GO:0042866">
    <property type="term" value="P:pyruvate biosynthetic process"/>
    <property type="evidence" value="ECO:0007669"/>
    <property type="project" value="UniProtKB-UniRule"/>
</dbReference>
<dbReference type="GO" id="GO:0006744">
    <property type="term" value="P:ubiquinone biosynthetic process"/>
    <property type="evidence" value="ECO:0007669"/>
    <property type="project" value="UniProtKB-UniRule"/>
</dbReference>
<dbReference type="FunFam" id="3.40.1410.10:FF:000002">
    <property type="entry name" value="Chorismate pyruvate-lyase"/>
    <property type="match status" value="1"/>
</dbReference>
<dbReference type="Gene3D" id="3.40.1410.10">
    <property type="entry name" value="Chorismate lyase-like"/>
    <property type="match status" value="1"/>
</dbReference>
<dbReference type="HAMAP" id="MF_01632">
    <property type="entry name" value="UbiC"/>
    <property type="match status" value="1"/>
</dbReference>
<dbReference type="InterPro" id="IPR007440">
    <property type="entry name" value="Chorismate--pyruvate_lyase"/>
</dbReference>
<dbReference type="InterPro" id="IPR028978">
    <property type="entry name" value="Chorismate_lyase_/UTRA_dom_sf"/>
</dbReference>
<dbReference type="NCBIfam" id="NF008656">
    <property type="entry name" value="PRK11655.1"/>
    <property type="match status" value="1"/>
</dbReference>
<dbReference type="PANTHER" id="PTHR38683">
    <property type="entry name" value="CHORISMATE PYRUVATE-LYASE"/>
    <property type="match status" value="1"/>
</dbReference>
<dbReference type="PANTHER" id="PTHR38683:SF1">
    <property type="entry name" value="CHORISMATE PYRUVATE-LYASE"/>
    <property type="match status" value="1"/>
</dbReference>
<dbReference type="Pfam" id="PF04345">
    <property type="entry name" value="Chor_lyase"/>
    <property type="match status" value="1"/>
</dbReference>
<dbReference type="SUPFAM" id="SSF64288">
    <property type="entry name" value="Chorismate lyase-like"/>
    <property type="match status" value="1"/>
</dbReference>
<sequence>MSHPALTQLRALRYFKEIPALDPQLLDWLLLEDSMTKRFEQQGKTVSVTMIREGFVEQNEIPEELPLLPKESRYWLREILLCADGEPWLAGRTVVPVSTLSGPELALQKLGKTPLGRYLFTSSTLTRDFIEIGRDAGLWGRRSRLRLSGKPLLLTELFLPASPLY</sequence>
<evidence type="ECO:0000255" key="1">
    <source>
        <dbReference type="HAMAP-Rule" id="MF_01632"/>
    </source>
</evidence>
<proteinExistence type="inferred from homology"/>
<keyword id="KW-0963">Cytoplasm</keyword>
<keyword id="KW-0456">Lyase</keyword>
<keyword id="KW-0670">Pyruvate</keyword>
<keyword id="KW-1185">Reference proteome</keyword>
<keyword id="KW-0831">Ubiquinone biosynthesis</keyword>
<accession>B2TX77</accession>
<comment type="function">
    <text evidence="1">Removes the pyruvyl group from chorismate, with concomitant aromatization of the ring, to provide 4-hydroxybenzoate (4HB) for the ubiquinone pathway.</text>
</comment>
<comment type="catalytic activity">
    <reaction evidence="1">
        <text>chorismate = 4-hydroxybenzoate + pyruvate</text>
        <dbReference type="Rhea" id="RHEA:16505"/>
        <dbReference type="ChEBI" id="CHEBI:15361"/>
        <dbReference type="ChEBI" id="CHEBI:17879"/>
        <dbReference type="ChEBI" id="CHEBI:29748"/>
        <dbReference type="EC" id="4.1.3.40"/>
    </reaction>
</comment>
<comment type="pathway">
    <text evidence="1">Cofactor biosynthesis; ubiquinone biosynthesis.</text>
</comment>
<comment type="subunit">
    <text evidence="1">Monomer.</text>
</comment>
<comment type="subcellular location">
    <subcellularLocation>
        <location evidence="1">Cytoplasm</location>
    </subcellularLocation>
</comment>
<comment type="similarity">
    <text evidence="1">Belongs to the UbiC family.</text>
</comment>
<reference key="1">
    <citation type="submission" date="2008-05" db="EMBL/GenBank/DDBJ databases">
        <title>Complete sequence of Shigella boydii serotype 18 strain BS512.</title>
        <authorList>
            <person name="Rasko D.A."/>
            <person name="Rosovitz M."/>
            <person name="Maurelli A.T."/>
            <person name="Myers G."/>
            <person name="Seshadri R."/>
            <person name="Cer R."/>
            <person name="Jiang L."/>
            <person name="Ravel J."/>
            <person name="Sebastian Y."/>
        </authorList>
    </citation>
    <scope>NUCLEOTIDE SEQUENCE [LARGE SCALE GENOMIC DNA]</scope>
    <source>
        <strain>CDC 3083-94 / BS512</strain>
    </source>
</reference>
<gene>
    <name evidence="1" type="primary">ubiC</name>
    <name type="ordered locus">SbBS512_E4558</name>
</gene>
<protein>
    <recommendedName>
        <fullName evidence="1">Chorismate pyruvate-lyase</fullName>
        <shortName evidence="1">CL</shortName>
        <shortName evidence="1">CPL</shortName>
        <ecNumber evidence="1">4.1.3.40</ecNumber>
    </recommendedName>
</protein>